<name>PHF1_SCHPO</name>
<reference key="1">
    <citation type="journal article" date="2002" name="Nature">
        <title>The genome sequence of Schizosaccharomyces pombe.</title>
        <authorList>
            <person name="Wood V."/>
            <person name="Gwilliam R."/>
            <person name="Rajandream M.A."/>
            <person name="Lyne M.H."/>
            <person name="Lyne R."/>
            <person name="Stewart A."/>
            <person name="Sgouros J.G."/>
            <person name="Peat N."/>
            <person name="Hayles J."/>
            <person name="Baker S.G."/>
            <person name="Basham D."/>
            <person name="Bowman S."/>
            <person name="Brooks K."/>
            <person name="Brown D."/>
            <person name="Brown S."/>
            <person name="Chillingworth T."/>
            <person name="Churcher C.M."/>
            <person name="Collins M."/>
            <person name="Connor R."/>
            <person name="Cronin A."/>
            <person name="Davis P."/>
            <person name="Feltwell T."/>
            <person name="Fraser A."/>
            <person name="Gentles S."/>
            <person name="Goble A."/>
            <person name="Hamlin N."/>
            <person name="Harris D.E."/>
            <person name="Hidalgo J."/>
            <person name="Hodgson G."/>
            <person name="Holroyd S."/>
            <person name="Hornsby T."/>
            <person name="Howarth S."/>
            <person name="Huckle E.J."/>
            <person name="Hunt S."/>
            <person name="Jagels K."/>
            <person name="James K.D."/>
            <person name="Jones L."/>
            <person name="Jones M."/>
            <person name="Leather S."/>
            <person name="McDonald S."/>
            <person name="McLean J."/>
            <person name="Mooney P."/>
            <person name="Moule S."/>
            <person name="Mungall K.L."/>
            <person name="Murphy L.D."/>
            <person name="Niblett D."/>
            <person name="Odell C."/>
            <person name="Oliver K."/>
            <person name="O'Neil S."/>
            <person name="Pearson D."/>
            <person name="Quail M.A."/>
            <person name="Rabbinowitsch E."/>
            <person name="Rutherford K.M."/>
            <person name="Rutter S."/>
            <person name="Saunders D."/>
            <person name="Seeger K."/>
            <person name="Sharp S."/>
            <person name="Skelton J."/>
            <person name="Simmonds M.N."/>
            <person name="Squares R."/>
            <person name="Squares S."/>
            <person name="Stevens K."/>
            <person name="Taylor K."/>
            <person name="Taylor R.G."/>
            <person name="Tivey A."/>
            <person name="Walsh S.V."/>
            <person name="Warren T."/>
            <person name="Whitehead S."/>
            <person name="Woodward J.R."/>
            <person name="Volckaert G."/>
            <person name="Aert R."/>
            <person name="Robben J."/>
            <person name="Grymonprez B."/>
            <person name="Weltjens I."/>
            <person name="Vanstreels E."/>
            <person name="Rieger M."/>
            <person name="Schaefer M."/>
            <person name="Mueller-Auer S."/>
            <person name="Gabel C."/>
            <person name="Fuchs M."/>
            <person name="Duesterhoeft A."/>
            <person name="Fritzc C."/>
            <person name="Holzer E."/>
            <person name="Moestl D."/>
            <person name="Hilbert H."/>
            <person name="Borzym K."/>
            <person name="Langer I."/>
            <person name="Beck A."/>
            <person name="Lehrach H."/>
            <person name="Reinhardt R."/>
            <person name="Pohl T.M."/>
            <person name="Eger P."/>
            <person name="Zimmermann W."/>
            <person name="Wedler H."/>
            <person name="Wambutt R."/>
            <person name="Purnelle B."/>
            <person name="Goffeau A."/>
            <person name="Cadieu E."/>
            <person name="Dreano S."/>
            <person name="Gloux S."/>
            <person name="Lelaure V."/>
            <person name="Mottier S."/>
            <person name="Galibert F."/>
            <person name="Aves S.J."/>
            <person name="Xiang Z."/>
            <person name="Hunt C."/>
            <person name="Moore K."/>
            <person name="Hurst S.M."/>
            <person name="Lucas M."/>
            <person name="Rochet M."/>
            <person name="Gaillardin C."/>
            <person name="Tallada V.A."/>
            <person name="Garzon A."/>
            <person name="Thode G."/>
            <person name="Daga R.R."/>
            <person name="Cruzado L."/>
            <person name="Jimenez J."/>
            <person name="Sanchez M."/>
            <person name="del Rey F."/>
            <person name="Benito J."/>
            <person name="Dominguez A."/>
            <person name="Revuelta J.L."/>
            <person name="Moreno S."/>
            <person name="Armstrong J."/>
            <person name="Forsburg S.L."/>
            <person name="Cerutti L."/>
            <person name="Lowe T."/>
            <person name="McCombie W.R."/>
            <person name="Paulsen I."/>
            <person name="Potashkin J."/>
            <person name="Shpakovski G.V."/>
            <person name="Ussery D."/>
            <person name="Barrell B.G."/>
            <person name="Nurse P."/>
        </authorList>
    </citation>
    <scope>NUCLEOTIDE SEQUENCE [LARGE SCALE GENOMIC DNA]</scope>
    <source>
        <strain>972 / ATCC 24843</strain>
    </source>
</reference>
<reference key="2">
    <citation type="journal article" date="2006" name="J. Biol. Chem.">
        <title>Fission yeast homologs of human histone H3 lysine 4 demethylase regulate a common set of genes with diverse functions.</title>
        <authorList>
            <person name="Nicolas E."/>
            <person name="Lee M.G."/>
            <person name="Hakimi M.-A."/>
            <person name="Cam H.P."/>
            <person name="Grewal S.I.S."/>
            <person name="Shiekhattar R."/>
        </authorList>
    </citation>
    <scope>IDENTIFICATION IN THE SWM HISTONE DEMETHYLASE COMPLEX</scope>
</reference>
<reference key="3">
    <citation type="journal article" date="2006" name="Nat. Biotechnol.">
        <title>ORFeome cloning and global analysis of protein localization in the fission yeast Schizosaccharomyces pombe.</title>
        <authorList>
            <person name="Matsuyama A."/>
            <person name="Arai R."/>
            <person name="Yashiroda Y."/>
            <person name="Shirai A."/>
            <person name="Kamata A."/>
            <person name="Sekido S."/>
            <person name="Kobayashi Y."/>
            <person name="Hashimoto A."/>
            <person name="Hamamoto M."/>
            <person name="Hiraoka Y."/>
            <person name="Horinouchi S."/>
            <person name="Yoshida M."/>
        </authorList>
    </citation>
    <scope>SUBCELLULAR LOCATION [LARGE SCALE ANALYSIS]</scope>
</reference>
<reference key="4">
    <citation type="journal article" date="2007" name="Mol. Cell">
        <title>S. pombe LSD1 homologs regulate heterochromatin propagation and euchromatic gene transcription.</title>
        <authorList>
            <person name="Lan F."/>
            <person name="Zaratiegui M."/>
            <person name="Villen J."/>
            <person name="Vaughn M.W."/>
            <person name="Verdel A."/>
            <person name="Huarte M."/>
            <person name="Shi Y."/>
            <person name="Gygi S.P."/>
            <person name="Moazed D."/>
            <person name="Martienssen R.A."/>
            <person name="Shi Y."/>
        </authorList>
    </citation>
    <scope>IDENTIFICATION IN THE SWM HISTONE DEMETHYLASE COMPLEX</scope>
    <scope>FUNCTION OF THE SWM COMPLEX</scope>
</reference>
<reference key="5">
    <citation type="journal article" date="2007" name="PLoS ONE">
        <title>Genome-wide studies of histone demethylation catalysed by the fission yeast homologues of mammalian LSD1.</title>
        <authorList>
            <person name="Opel M."/>
            <person name="Lando D."/>
            <person name="Bonilla C."/>
            <person name="Trewick S.C."/>
            <person name="Boukaba A."/>
            <person name="Walfridsson J."/>
            <person name="Cauwood J."/>
            <person name="Werler P.J."/>
            <person name="Carr A.M."/>
            <person name="Kouzarides T."/>
            <person name="Murzina N.V."/>
            <person name="Allshire R.C."/>
            <person name="Ekwall K."/>
            <person name="Laue E.D."/>
        </authorList>
    </citation>
    <scope>IDENTIFICATION IN THE SWM HISTONE DEMETHYLASE COMPLEX</scope>
    <scope>FUNCTION OF THE SWM COMPLEX</scope>
</reference>
<keyword id="KW-0156">Chromatin regulator</keyword>
<keyword id="KW-0479">Metal-binding</keyword>
<keyword id="KW-0539">Nucleus</keyword>
<keyword id="KW-1185">Reference proteome</keyword>
<keyword id="KW-0804">Transcription</keyword>
<keyword id="KW-0805">Transcription regulation</keyword>
<keyword id="KW-0862">Zinc</keyword>
<keyword id="KW-0863">Zinc-finger</keyword>
<gene>
    <name type="primary">phf1</name>
    <name type="synonym">saf50</name>
    <name type="synonym">swp1</name>
    <name type="ORF">SPCC4G3.07c</name>
</gene>
<feature type="chain" id="PRO_0000363000" description="SWM histone demethylase complex subunit phf1">
    <location>
        <begin position="1"/>
        <end position="461"/>
    </location>
</feature>
<feature type="zinc finger region" description="PHD-type" evidence="1">
    <location>
        <begin position="190"/>
        <end position="246"/>
    </location>
</feature>
<feature type="region of interest" description="Disordered" evidence="2">
    <location>
        <begin position="79"/>
        <end position="130"/>
    </location>
</feature>
<feature type="compositionally biased region" description="Polar residues" evidence="2">
    <location>
        <begin position="102"/>
        <end position="119"/>
    </location>
</feature>
<accession>P87233</accession>
<proteinExistence type="evidence at protein level"/>
<dbReference type="EMBL" id="CU329672">
    <property type="protein sequence ID" value="CAB09774.1"/>
    <property type="molecule type" value="Genomic_DNA"/>
</dbReference>
<dbReference type="PIR" id="T41369">
    <property type="entry name" value="T41369"/>
</dbReference>
<dbReference type="RefSeq" id="NP_587831.1">
    <property type="nucleotide sequence ID" value="NM_001022824.2"/>
</dbReference>
<dbReference type="SMR" id="P87233"/>
<dbReference type="BioGRID" id="275971">
    <property type="interactions" value="6"/>
</dbReference>
<dbReference type="ComplexPortal" id="CPX-10327">
    <property type="entry name" value="SWM histone demethylase complex"/>
</dbReference>
<dbReference type="FunCoup" id="P87233">
    <property type="interactions" value="275"/>
</dbReference>
<dbReference type="STRING" id="284812.P87233"/>
<dbReference type="PaxDb" id="4896-SPCC4G3.07c.1"/>
<dbReference type="EnsemblFungi" id="SPCC4G3.07c.1">
    <property type="protein sequence ID" value="SPCC4G3.07c.1:pep"/>
    <property type="gene ID" value="SPCC4G3.07c"/>
</dbReference>
<dbReference type="GeneID" id="2539406"/>
<dbReference type="KEGG" id="spo:2539406"/>
<dbReference type="PomBase" id="SPCC4G3.07c">
    <property type="gene designation" value="phf1"/>
</dbReference>
<dbReference type="VEuPathDB" id="FungiDB:SPCC4G3.07c"/>
<dbReference type="eggNOG" id="KOG4323">
    <property type="taxonomic scope" value="Eukaryota"/>
</dbReference>
<dbReference type="HOGENOM" id="CLU_594680_0_0_1"/>
<dbReference type="InParanoid" id="P87233"/>
<dbReference type="OMA" id="ENIFAWM"/>
<dbReference type="PRO" id="PR:P87233"/>
<dbReference type="Proteomes" id="UP000002485">
    <property type="component" value="Chromosome III"/>
</dbReference>
<dbReference type="GO" id="GO:0000785">
    <property type="term" value="C:chromatin"/>
    <property type="evidence" value="ECO:0000353"/>
    <property type="project" value="PomBase"/>
</dbReference>
<dbReference type="GO" id="GO:0033193">
    <property type="term" value="C:Lsd1/2 complex"/>
    <property type="evidence" value="ECO:0000314"/>
    <property type="project" value="PomBase"/>
</dbReference>
<dbReference type="GO" id="GO:0031934">
    <property type="term" value="C:mating-type region heterochromatin"/>
    <property type="evidence" value="ECO:0000353"/>
    <property type="project" value="PomBase"/>
</dbReference>
<dbReference type="GO" id="GO:0005634">
    <property type="term" value="C:nucleus"/>
    <property type="evidence" value="ECO:0007005"/>
    <property type="project" value="PomBase"/>
</dbReference>
<dbReference type="GO" id="GO:0005721">
    <property type="term" value="C:pericentric heterochromatin"/>
    <property type="evidence" value="ECO:0000353"/>
    <property type="project" value="PomBase"/>
</dbReference>
<dbReference type="GO" id="GO:0140720">
    <property type="term" value="C:subtelomeric heterochromatin"/>
    <property type="evidence" value="ECO:0000353"/>
    <property type="project" value="PomBase"/>
</dbReference>
<dbReference type="GO" id="GO:0003682">
    <property type="term" value="F:chromatin binding"/>
    <property type="evidence" value="ECO:0000318"/>
    <property type="project" value="GO_Central"/>
</dbReference>
<dbReference type="GO" id="GO:0003677">
    <property type="term" value="F:DNA binding"/>
    <property type="evidence" value="ECO:0000318"/>
    <property type="project" value="GO_Central"/>
</dbReference>
<dbReference type="GO" id="GO:0008270">
    <property type="term" value="F:zinc ion binding"/>
    <property type="evidence" value="ECO:0007669"/>
    <property type="project" value="UniProtKB-KW"/>
</dbReference>
<dbReference type="GO" id="GO:0006338">
    <property type="term" value="P:chromatin remodeling"/>
    <property type="evidence" value="ECO:0000353"/>
    <property type="project" value="PomBase"/>
</dbReference>
<dbReference type="GO" id="GO:0033696">
    <property type="term" value="P:heterochromatin boundary formation"/>
    <property type="evidence" value="ECO:0000353"/>
    <property type="project" value="PomBase"/>
</dbReference>
<dbReference type="GO" id="GO:0045814">
    <property type="term" value="P:negative regulation of gene expression, epigenetic"/>
    <property type="evidence" value="ECO:0000318"/>
    <property type="project" value="GO_Central"/>
</dbReference>
<dbReference type="CDD" id="cd15502">
    <property type="entry name" value="PHD_Phf1p_Phf2p_like"/>
    <property type="match status" value="1"/>
</dbReference>
<dbReference type="FunFam" id="3.30.40.10:FF:000101">
    <property type="entry name" value="Integrator complex subunit 12"/>
    <property type="match status" value="1"/>
</dbReference>
<dbReference type="Gene3D" id="3.30.40.10">
    <property type="entry name" value="Zinc/RING finger domain, C3HC4 (zinc finger)"/>
    <property type="match status" value="1"/>
</dbReference>
<dbReference type="InterPro" id="IPR019786">
    <property type="entry name" value="Zinc_finger_PHD-type_CS"/>
</dbReference>
<dbReference type="InterPro" id="IPR011011">
    <property type="entry name" value="Znf_FYVE_PHD"/>
</dbReference>
<dbReference type="InterPro" id="IPR001965">
    <property type="entry name" value="Znf_PHD"/>
</dbReference>
<dbReference type="InterPro" id="IPR019787">
    <property type="entry name" value="Znf_PHD-finger"/>
</dbReference>
<dbReference type="InterPro" id="IPR013083">
    <property type="entry name" value="Znf_RING/FYVE/PHD"/>
</dbReference>
<dbReference type="PANTHER" id="PTHR12628:SF10">
    <property type="entry name" value="HOMEOBOX DOMAIN-CONTAINING PROTEIN"/>
    <property type="match status" value="1"/>
</dbReference>
<dbReference type="PANTHER" id="PTHR12628">
    <property type="entry name" value="POLYCOMB-LIKE TRANSCRIPTION FACTOR"/>
    <property type="match status" value="1"/>
</dbReference>
<dbReference type="Pfam" id="PF00628">
    <property type="entry name" value="PHD"/>
    <property type="match status" value="1"/>
</dbReference>
<dbReference type="SMART" id="SM00249">
    <property type="entry name" value="PHD"/>
    <property type="match status" value="1"/>
</dbReference>
<dbReference type="SUPFAM" id="SSF57903">
    <property type="entry name" value="FYVE/PHD zinc finger"/>
    <property type="match status" value="1"/>
</dbReference>
<dbReference type="PROSITE" id="PS01359">
    <property type="entry name" value="ZF_PHD_1"/>
    <property type="match status" value="1"/>
</dbReference>
<dbReference type="PROSITE" id="PS50016">
    <property type="entry name" value="ZF_PHD_2"/>
    <property type="match status" value="1"/>
</dbReference>
<comment type="function">
    <text evidence="5 6">Component of the SWM histone demethylase complex that specifically demethylates H3K9me2, a specific tag for epigenetic transcriptional activation, thereby acting as a corepressor. Has a role in regulating heterochromatin propagation and euchromatic transcription.</text>
</comment>
<comment type="subunit">
    <text evidence="4 5 6">Component of the SWM histone demethylase complex composed of at least lsd1, lsd2, phf1 and phf2.</text>
</comment>
<comment type="subcellular location">
    <subcellularLocation>
        <location evidence="3">Nucleus</location>
    </subcellularLocation>
</comment>
<sequence length="461" mass="51285">MSQKNFFDEGKSYGVNDYAGFHFENGADSSLPQVSAQGVVRETDSSNFDASPVASGSGISDVGPFGADFHQLQQHVQTPYGGMTMPASSSSGATSVPPEQDPSLSVSFNRLPKSASTKTKNGRIRSSRREDDNRIPFYDLDVAEGAEDDLQEDFHVEGMKTKSGRKIQRPVAYNPNATALKRKSRKVDMVTLCSVCQRGHSPLSNRIVFCDGCNSPYHQLCHHPPIDDATVQDVDAEWFCMKCQYRRAKQPLETGMTAQDLGLSESDKKMYLSSLPTPHLADLILFCEKSYPSLPIYNPRTRELLGEIRHQLLVSSERQQISLQERLHAKQDEAPSDEPAPVPYTASYVANSGTLYDYPTLIRLAIRNTLSPSKDEIFNWLAQNVPLLPTFHDSASEAIRWMVNKGQLVRSGSIYQIATVEEYPHLQPSLLPTFQRNRKVPKLVPVSFPTDDPQNLCATVL</sequence>
<protein>
    <recommendedName>
        <fullName>SWM histone demethylase complex subunit phf1</fullName>
    </recommendedName>
    <alternativeName>
        <fullName>PHD finger domain-containing protein phf1</fullName>
    </alternativeName>
</protein>
<evidence type="ECO:0000255" key="1">
    <source>
        <dbReference type="PROSITE-ProRule" id="PRU00146"/>
    </source>
</evidence>
<evidence type="ECO:0000256" key="2">
    <source>
        <dbReference type="SAM" id="MobiDB-lite"/>
    </source>
</evidence>
<evidence type="ECO:0000269" key="3">
    <source>
    </source>
</evidence>
<evidence type="ECO:0000269" key="4">
    <source>
    </source>
</evidence>
<evidence type="ECO:0000269" key="5">
    <source>
    </source>
</evidence>
<evidence type="ECO:0000269" key="6">
    <source>
    </source>
</evidence>
<organism>
    <name type="scientific">Schizosaccharomyces pombe (strain 972 / ATCC 24843)</name>
    <name type="common">Fission yeast</name>
    <dbReference type="NCBI Taxonomy" id="284812"/>
    <lineage>
        <taxon>Eukaryota</taxon>
        <taxon>Fungi</taxon>
        <taxon>Dikarya</taxon>
        <taxon>Ascomycota</taxon>
        <taxon>Taphrinomycotina</taxon>
        <taxon>Schizosaccharomycetes</taxon>
        <taxon>Schizosaccharomycetales</taxon>
        <taxon>Schizosaccharomycetaceae</taxon>
        <taxon>Schizosaccharomyces</taxon>
    </lineage>
</organism>